<organism>
    <name type="scientific">Penicillium canescens</name>
    <dbReference type="NCBI Taxonomy" id="5083"/>
    <lineage>
        <taxon>Eukaryota</taxon>
        <taxon>Fungi</taxon>
        <taxon>Dikarya</taxon>
        <taxon>Ascomycota</taxon>
        <taxon>Pezizomycotina</taxon>
        <taxon>Eurotiomycetes</taxon>
        <taxon>Eurotiomycetidae</taxon>
        <taxon>Eurotiales</taxon>
        <taxon>Aspergillaceae</taxon>
        <taxon>Penicillium</taxon>
    </lineage>
</organism>
<feature type="chain" id="PRO_0000453894" description="Nicotinic acid-CoA ligase olcI">
    <location>
        <begin position="1"/>
        <end position="546"/>
    </location>
</feature>
<feature type="region of interest" description="AMP-binding" evidence="1">
    <location>
        <begin position="445"/>
        <end position="523"/>
    </location>
</feature>
<feature type="binding site" evidence="1">
    <location>
        <begin position="194"/>
        <end position="205"/>
    </location>
    <ligand>
        <name>AMP</name>
        <dbReference type="ChEBI" id="CHEBI:456215"/>
    </ligand>
</feature>
<name>OLCI_PENCN</name>
<gene>
    <name evidence="3" type="primary">olcI</name>
</gene>
<reference key="1">
    <citation type="journal article" date="2015" name="Chem. Sci.">
        <title>Genome mining and molecular characterization of the biosynthetic gene cluster of a diterpenic meroterpenoid, 15-deoxyoxalicine B, in Penicillium canescens.</title>
        <authorList>
            <person name="Yaegashi J."/>
            <person name="Romsdahl J."/>
            <person name="Chiang Y.M."/>
            <person name="Wang C.C.C."/>
        </authorList>
    </citation>
    <scope>FUNCTION</scope>
    <scope>DISRUPTION PHENOTYPE</scope>
    <scope>PATHWAY</scope>
</reference>
<reference key="2">
    <citation type="journal article" date="2016" name="Chem. Sci.">
        <title>Correction: Genome mining and molecular characterization of the biosynthetic gene cluster of a diterpenic meroterpenoid, 15-deoxyoxalicine B, in Penicillium canescens.</title>
        <authorList>
            <person name="Yaegashi J."/>
            <person name="Romsdahl J."/>
            <person name="Chiang Y.M."/>
            <person name="Wang C.C.C."/>
        </authorList>
    </citation>
    <scope>ERRATUM OF PUBMED:30090271</scope>
</reference>
<evidence type="ECO:0000255" key="1"/>
<evidence type="ECO:0000269" key="2">
    <source>
    </source>
</evidence>
<evidence type="ECO:0000303" key="3">
    <source>
    </source>
</evidence>
<evidence type="ECO:0000305" key="4"/>
<evidence type="ECO:0000305" key="5">
    <source>
    </source>
</evidence>
<protein>
    <recommendedName>
        <fullName evidence="3">Nicotinic acid-CoA ligase olcI</fullName>
        <ecNumber evidence="2">6.2.1.-</ecNumber>
    </recommendedName>
    <alternativeName>
        <fullName evidence="3">15-deoxyoxalicine B biosynthesis cluster protein I</fullName>
    </alternativeName>
</protein>
<sequence>MDLVSFAFSGPATHADQAPLYIDAKRPSRSLSEAPFRRLVRSLVAGFKAYGVERGDTVLVQLDNLVIHSALLFGIVGAGGVYMGCSPSSPRHELDHFVSLVEPRLILTVASALSVVRDVCTNKGISWSQICLVDDQSVDHLVSFAQNQSYNPQATPPVRDEGVHFDLKDMVSFGESDWMRIYDEATARITPAAMFSTSGTSGLPKAAIRTHHTIISHHQTVHYDVPYPVTRLMALPMSHSFGDFWSNLFPIRYGHPLYVMPRFDLSTFLNVVHRYNITETYLVPAMVHILNQSTLPVRESLGSLFYIGVSGAPIDADSLQRCQKLLNPQACIGQLWGMTEVGVIFQNRYGDQRYPGSIGKLLENYDIRLVRLDDGTTIHGESTPGELYVRGPGIMLAYQGRDDGIDAQGWFRTGDIAYSEDEHYHIVGRTKELIKVRGYSVAPAEIEAVLLKDPRVHDTMVIGITLPDGSTEVPRAYVVCALGQARPTADEVSALALKNLASYKALDGGVIFVESLPRTGIGKPHRSKLSHLDAQRTKLAALLSPV</sequence>
<comment type="function">
    <text evidence="2 5">Nicotinic acid-CoA ligase; part of the gene cluster that mediates the biosynthesis of 15-deoxyoxalicine B (PubMed:30090271). The first step of the pathway is the synthesis of nicotinyl-CoA from nicotinic acid by the nicotinic acid-CoA ligase olcI (PubMed:30090271). Nicotinyl-CoA is then a substrate of polyketide synthase olcA to produce 4-hydroxy-6-(3-pyridinyl)-2H-pyran-2-one (HPPO) which is further prenylated by the polyprenyl transferase olcH to yield geranylgeranyl-HPPO (PubMed:30090271). Geranylgeranyl pyrophosphate is provided by the cluster-specific geranylgeranyl pyrophosphate synthase olcC (PubMed:30090271). The FAD-dependent monooxygenase olcE catalyzes the epoxidation of geranylgeranyl-HPPO and the terpene cyclase olcD catalyzes the cyclization of the terpenoid component, resulting in the formation of the tricyclic terpene moiety seen in predecaturin E (PubMed:30090271). The cytochrome P450 monooxygenase then catalyzes the allylic oxidation of predecaturin E, which is followed by spirocylization with concomitant loss of one molecule of water to form decaturin E (PubMed:30090271). Decaturin E is the substrate of the cytochrome P450 monooxygenase olcJ which hydroxylates it at the C-29 position to form decaturin F (PubMed:30090271). The short-chain dehydrogenase/reductase olcF may catalyze the oxidation of decaturin F to generate the 29-hydroxyl-27-one intermediate, and subsequent hemiacetal formation probably leads to the formation of decaturin C (Probable). The dioxygenase olcK may be a peroxisomal enzyme that catalyzes the hydroxylation of decaturin C into decaturin A once decaturin C is shuttled into the peroxisome by the MFS transporter olcL (Probable). Finally the cytochrome P450 monooxygenase olcB catalyzes the oxidative rearrangement to yield 15-deoxyoxalicine B (PubMed:30090271). In the absence of olcJ, decaturin E may be shunted to a pathway in which it is oxidized to a ketone, possibly by olcF, to form decaturin D, which undergoes further allylic oxidation to yield decaturin G (PubMed:30090271). Moreover, in the absence of oclK or oclL, oclB can convert decaturin C into 15-deoxyoxalicine A (PubMed:30090271).</text>
</comment>
<comment type="catalytic activity">
    <reaction evidence="2">
        <text>nicotinate + ATP + CoA = nicotinyl-CoA + AMP + diphosphate</text>
        <dbReference type="Rhea" id="RHEA:64332"/>
        <dbReference type="ChEBI" id="CHEBI:30616"/>
        <dbReference type="ChEBI" id="CHEBI:32544"/>
        <dbReference type="ChEBI" id="CHEBI:33019"/>
        <dbReference type="ChEBI" id="CHEBI:57287"/>
        <dbReference type="ChEBI" id="CHEBI:149703"/>
        <dbReference type="ChEBI" id="CHEBI:456215"/>
    </reaction>
    <physiologicalReaction direction="left-to-right" evidence="2">
        <dbReference type="Rhea" id="RHEA:64333"/>
    </physiologicalReaction>
</comment>
<comment type="pathway">
    <text evidence="2">Secondary metabolite biosynthesis; terpenoid biosynthesis.</text>
</comment>
<comment type="disruption phenotype">
    <text evidence="2">Abolishes the production of 15-deoxyoxalicine B.</text>
</comment>
<comment type="miscellaneous">
    <text evidence="2">The 15-deoxyoxalicine B cluster is a rare cluster that contains its own geranylgeranyl pyrophosphate synthase (olcC), in contrast to other related clusters which rely on a FPP/GGPP synthase localized outside of the cluster.</text>
</comment>
<comment type="similarity">
    <text evidence="4">Belongs to the ATP-dependent AMP-binding enzyme family.</text>
</comment>
<accession>P9WEQ8</accession>
<keyword id="KW-0067">ATP-binding</keyword>
<keyword id="KW-0436">Ligase</keyword>
<keyword id="KW-0547">Nucleotide-binding</keyword>
<proteinExistence type="inferred from homology"/>
<dbReference type="EC" id="6.2.1.-" evidence="2"/>
<dbReference type="SMR" id="P9WEQ8"/>
<dbReference type="UniPathway" id="UPA00213"/>
<dbReference type="GO" id="GO:0005524">
    <property type="term" value="F:ATP binding"/>
    <property type="evidence" value="ECO:0007669"/>
    <property type="project" value="UniProtKB-KW"/>
</dbReference>
<dbReference type="GO" id="GO:0016405">
    <property type="term" value="F:CoA-ligase activity"/>
    <property type="evidence" value="ECO:0007669"/>
    <property type="project" value="TreeGrafter"/>
</dbReference>
<dbReference type="GO" id="GO:0019748">
    <property type="term" value="P:secondary metabolic process"/>
    <property type="evidence" value="ECO:0007669"/>
    <property type="project" value="TreeGrafter"/>
</dbReference>
<dbReference type="GO" id="GO:0016114">
    <property type="term" value="P:terpenoid biosynthetic process"/>
    <property type="evidence" value="ECO:0007669"/>
    <property type="project" value="UniProtKB-UniPathway"/>
</dbReference>
<dbReference type="Gene3D" id="3.30.300.30">
    <property type="match status" value="1"/>
</dbReference>
<dbReference type="Gene3D" id="3.40.50.12780">
    <property type="entry name" value="N-terminal domain of ligase-like"/>
    <property type="match status" value="1"/>
</dbReference>
<dbReference type="InterPro" id="IPR025110">
    <property type="entry name" value="AMP-bd_C"/>
</dbReference>
<dbReference type="InterPro" id="IPR045851">
    <property type="entry name" value="AMP-bd_C_sf"/>
</dbReference>
<dbReference type="InterPro" id="IPR000873">
    <property type="entry name" value="AMP-dep_synth/lig_dom"/>
</dbReference>
<dbReference type="InterPro" id="IPR042099">
    <property type="entry name" value="ANL_N_sf"/>
</dbReference>
<dbReference type="PANTHER" id="PTHR24096:SF317">
    <property type="entry name" value="ADENYLATE-FORMING ENZYME AFEA"/>
    <property type="match status" value="1"/>
</dbReference>
<dbReference type="PANTHER" id="PTHR24096">
    <property type="entry name" value="LONG-CHAIN-FATTY-ACID--COA LIGASE"/>
    <property type="match status" value="1"/>
</dbReference>
<dbReference type="Pfam" id="PF00501">
    <property type="entry name" value="AMP-binding"/>
    <property type="match status" value="1"/>
</dbReference>
<dbReference type="Pfam" id="PF13193">
    <property type="entry name" value="AMP-binding_C"/>
    <property type="match status" value="1"/>
</dbReference>
<dbReference type="SUPFAM" id="SSF56801">
    <property type="entry name" value="Acetyl-CoA synthetase-like"/>
    <property type="match status" value="1"/>
</dbReference>
<dbReference type="PROSITE" id="PS00455">
    <property type="entry name" value="AMP_BINDING"/>
    <property type="match status" value="1"/>
</dbReference>